<organism>
    <name type="scientific">Bacillus cereus (strain ATCC 14579 / DSM 31 / CCUG 7414 / JCM 2152 / NBRC 15305 / NCIMB 9373 / NCTC 2599 / NRRL B-3711)</name>
    <dbReference type="NCBI Taxonomy" id="226900"/>
    <lineage>
        <taxon>Bacteria</taxon>
        <taxon>Bacillati</taxon>
        <taxon>Bacillota</taxon>
        <taxon>Bacilli</taxon>
        <taxon>Bacillales</taxon>
        <taxon>Bacillaceae</taxon>
        <taxon>Bacillus</taxon>
        <taxon>Bacillus cereus group</taxon>
    </lineage>
</organism>
<proteinExistence type="inferred from homology"/>
<sequence>MLDTLLINIGQLLTMDQEDGLLRREAMNTLPVIENGVVGIENGVITFVGTAEEAKGLQAKEVIDSGGKMVSPGLVDPHTHLVFGGSRENEIALKLQGVPYLEILEQGGGILSTVNATKQASKEELVQKAKFHLDRMLSFGVTTVEAKSGYGLDDETEWKQLEATAQLQKEHPIDLVSTFLGAHAVPKEYKGRSKEFLQWMLDLLPEMKEKQLVEFVDIFCETGVFSVEESKEFLLKAKELGFDVKIHADEIDPLGGAEAAAEIGAASADHLVGASDKGIEMLANSNTVATLLPGTTFYLNKESFARGRKMIDEGVAVALATDFNPGSCPTENIQLIMSIAMLKLKMTPEEVWNAVTVNSSYAINRGDVAGKIRVGRKADLVLWDAYNYAYVPYHYGVSHVNTVWKNGNIAYTRGEQSWSTATI</sequence>
<accession>Q81AC8</accession>
<reference key="1">
    <citation type="journal article" date="2003" name="Nature">
        <title>Genome sequence of Bacillus cereus and comparative analysis with Bacillus anthracis.</title>
        <authorList>
            <person name="Ivanova N."/>
            <person name="Sorokin A."/>
            <person name="Anderson I."/>
            <person name="Galleron N."/>
            <person name="Candelon B."/>
            <person name="Kapatral V."/>
            <person name="Bhattacharyya A."/>
            <person name="Reznik G."/>
            <person name="Mikhailova N."/>
            <person name="Lapidus A."/>
            <person name="Chu L."/>
            <person name="Mazur M."/>
            <person name="Goltsman E."/>
            <person name="Larsen N."/>
            <person name="D'Souza M."/>
            <person name="Walunas T."/>
            <person name="Grechkin Y."/>
            <person name="Pusch G."/>
            <person name="Haselkorn R."/>
            <person name="Fonstein M."/>
            <person name="Ehrlich S.D."/>
            <person name="Overbeek R."/>
            <person name="Kyrpides N.C."/>
        </authorList>
    </citation>
    <scope>NUCLEOTIDE SEQUENCE [LARGE SCALE GENOMIC DNA]</scope>
    <source>
        <strain>ATCC 14579 / DSM 31 / CCUG 7414 / JCM 2152 / NBRC 15305 / NCIMB 9373 / NCTC 2599 / NRRL B-3711</strain>
    </source>
</reference>
<name>HUTI_BACCR</name>
<feature type="chain" id="PRO_0000306430" description="Imidazolonepropionase">
    <location>
        <begin position="1"/>
        <end position="423"/>
    </location>
</feature>
<feature type="binding site" evidence="1">
    <location>
        <position position="78"/>
    </location>
    <ligand>
        <name>Fe(3+)</name>
        <dbReference type="ChEBI" id="CHEBI:29034"/>
    </ligand>
</feature>
<feature type="binding site" evidence="1">
    <location>
        <position position="78"/>
    </location>
    <ligand>
        <name>Zn(2+)</name>
        <dbReference type="ChEBI" id="CHEBI:29105"/>
    </ligand>
</feature>
<feature type="binding site" evidence="1">
    <location>
        <position position="80"/>
    </location>
    <ligand>
        <name>Fe(3+)</name>
        <dbReference type="ChEBI" id="CHEBI:29034"/>
    </ligand>
</feature>
<feature type="binding site" evidence="1">
    <location>
        <position position="80"/>
    </location>
    <ligand>
        <name>Zn(2+)</name>
        <dbReference type="ChEBI" id="CHEBI:29105"/>
    </ligand>
</feature>
<feature type="binding site" evidence="1">
    <location>
        <position position="87"/>
    </location>
    <ligand>
        <name>4-imidazolone-5-propanoate</name>
        <dbReference type="ChEBI" id="CHEBI:77893"/>
    </ligand>
</feature>
<feature type="binding site" evidence="1">
    <location>
        <position position="150"/>
    </location>
    <ligand>
        <name>4-imidazolone-5-propanoate</name>
        <dbReference type="ChEBI" id="CHEBI:77893"/>
    </ligand>
</feature>
<feature type="binding site" evidence="1">
    <location>
        <position position="150"/>
    </location>
    <ligand>
        <name>N-formimidoyl-L-glutamate</name>
        <dbReference type="ChEBI" id="CHEBI:58928"/>
    </ligand>
</feature>
<feature type="binding site" evidence="1">
    <location>
        <position position="183"/>
    </location>
    <ligand>
        <name>4-imidazolone-5-propanoate</name>
        <dbReference type="ChEBI" id="CHEBI:77893"/>
    </ligand>
</feature>
<feature type="binding site" evidence="1">
    <location>
        <position position="247"/>
    </location>
    <ligand>
        <name>Fe(3+)</name>
        <dbReference type="ChEBI" id="CHEBI:29034"/>
    </ligand>
</feature>
<feature type="binding site" evidence="1">
    <location>
        <position position="247"/>
    </location>
    <ligand>
        <name>Zn(2+)</name>
        <dbReference type="ChEBI" id="CHEBI:29105"/>
    </ligand>
</feature>
<feature type="binding site" evidence="1">
    <location>
        <position position="250"/>
    </location>
    <ligand>
        <name>4-imidazolone-5-propanoate</name>
        <dbReference type="ChEBI" id="CHEBI:77893"/>
    </ligand>
</feature>
<feature type="binding site" evidence="1">
    <location>
        <position position="322"/>
    </location>
    <ligand>
        <name>Fe(3+)</name>
        <dbReference type="ChEBI" id="CHEBI:29034"/>
    </ligand>
</feature>
<feature type="binding site" evidence="1">
    <location>
        <position position="322"/>
    </location>
    <ligand>
        <name>Zn(2+)</name>
        <dbReference type="ChEBI" id="CHEBI:29105"/>
    </ligand>
</feature>
<feature type="binding site" evidence="1">
    <location>
        <position position="324"/>
    </location>
    <ligand>
        <name>N-formimidoyl-L-glutamate</name>
        <dbReference type="ChEBI" id="CHEBI:58928"/>
    </ligand>
</feature>
<feature type="binding site" evidence="1">
    <location>
        <position position="326"/>
    </location>
    <ligand>
        <name>N-formimidoyl-L-glutamate</name>
        <dbReference type="ChEBI" id="CHEBI:58928"/>
    </ligand>
</feature>
<feature type="binding site" evidence="1">
    <location>
        <position position="327"/>
    </location>
    <ligand>
        <name>4-imidazolone-5-propanoate</name>
        <dbReference type="ChEBI" id="CHEBI:77893"/>
    </ligand>
</feature>
<protein>
    <recommendedName>
        <fullName evidence="1">Imidazolonepropionase</fullName>
        <ecNumber evidence="1">3.5.2.7</ecNumber>
    </recommendedName>
    <alternativeName>
        <fullName evidence="1">Imidazolone-5-propionate hydrolase</fullName>
    </alternativeName>
</protein>
<dbReference type="EC" id="3.5.2.7" evidence="1"/>
<dbReference type="EMBL" id="AE016877">
    <property type="protein sequence ID" value="AAP10579.1"/>
    <property type="molecule type" value="Genomic_DNA"/>
</dbReference>
<dbReference type="RefSeq" id="NP_833378.1">
    <property type="nucleotide sequence ID" value="NC_004722.1"/>
</dbReference>
<dbReference type="RefSeq" id="WP_000887560.1">
    <property type="nucleotide sequence ID" value="NC_004722.1"/>
</dbReference>
<dbReference type="SMR" id="Q81AC8"/>
<dbReference type="STRING" id="226900.BC_3650"/>
<dbReference type="KEGG" id="bce:BC3650"/>
<dbReference type="PATRIC" id="fig|226900.8.peg.3752"/>
<dbReference type="HOGENOM" id="CLU_041647_0_1_9"/>
<dbReference type="OrthoDB" id="9776455at2"/>
<dbReference type="UniPathway" id="UPA00379">
    <property type="reaction ID" value="UER00551"/>
</dbReference>
<dbReference type="Proteomes" id="UP000001417">
    <property type="component" value="Chromosome"/>
</dbReference>
<dbReference type="GO" id="GO:0005737">
    <property type="term" value="C:cytoplasm"/>
    <property type="evidence" value="ECO:0007669"/>
    <property type="project" value="UniProtKB-SubCell"/>
</dbReference>
<dbReference type="GO" id="GO:0050480">
    <property type="term" value="F:imidazolonepropionase activity"/>
    <property type="evidence" value="ECO:0000318"/>
    <property type="project" value="GO_Central"/>
</dbReference>
<dbReference type="GO" id="GO:0005506">
    <property type="term" value="F:iron ion binding"/>
    <property type="evidence" value="ECO:0007669"/>
    <property type="project" value="UniProtKB-UniRule"/>
</dbReference>
<dbReference type="GO" id="GO:0008270">
    <property type="term" value="F:zinc ion binding"/>
    <property type="evidence" value="ECO:0007669"/>
    <property type="project" value="UniProtKB-UniRule"/>
</dbReference>
<dbReference type="GO" id="GO:0006548">
    <property type="term" value="P:L-histidine catabolic process"/>
    <property type="evidence" value="ECO:0000318"/>
    <property type="project" value="GO_Central"/>
</dbReference>
<dbReference type="GO" id="GO:0019556">
    <property type="term" value="P:L-histidine catabolic process to glutamate and formamide"/>
    <property type="evidence" value="ECO:0007669"/>
    <property type="project" value="UniProtKB-UniPathway"/>
</dbReference>
<dbReference type="GO" id="GO:0019557">
    <property type="term" value="P:L-histidine catabolic process to glutamate and formate"/>
    <property type="evidence" value="ECO:0007669"/>
    <property type="project" value="UniProtKB-UniPathway"/>
</dbReference>
<dbReference type="CDD" id="cd01296">
    <property type="entry name" value="Imidazolone-5PH"/>
    <property type="match status" value="1"/>
</dbReference>
<dbReference type="FunFam" id="3.20.20.140:FF:000007">
    <property type="entry name" value="Imidazolonepropionase"/>
    <property type="match status" value="1"/>
</dbReference>
<dbReference type="Gene3D" id="3.20.20.140">
    <property type="entry name" value="Metal-dependent hydrolases"/>
    <property type="match status" value="1"/>
</dbReference>
<dbReference type="Gene3D" id="2.30.40.10">
    <property type="entry name" value="Urease, subunit C, domain 1"/>
    <property type="match status" value="1"/>
</dbReference>
<dbReference type="HAMAP" id="MF_00372">
    <property type="entry name" value="HutI"/>
    <property type="match status" value="1"/>
</dbReference>
<dbReference type="InterPro" id="IPR006680">
    <property type="entry name" value="Amidohydro-rel"/>
</dbReference>
<dbReference type="InterPro" id="IPR005920">
    <property type="entry name" value="HutI"/>
</dbReference>
<dbReference type="InterPro" id="IPR011059">
    <property type="entry name" value="Metal-dep_hydrolase_composite"/>
</dbReference>
<dbReference type="InterPro" id="IPR032466">
    <property type="entry name" value="Metal_Hydrolase"/>
</dbReference>
<dbReference type="NCBIfam" id="TIGR01224">
    <property type="entry name" value="hutI"/>
    <property type="match status" value="1"/>
</dbReference>
<dbReference type="PANTHER" id="PTHR42752">
    <property type="entry name" value="IMIDAZOLONEPROPIONASE"/>
    <property type="match status" value="1"/>
</dbReference>
<dbReference type="PANTHER" id="PTHR42752:SF1">
    <property type="entry name" value="IMIDAZOLONEPROPIONASE-RELATED"/>
    <property type="match status" value="1"/>
</dbReference>
<dbReference type="Pfam" id="PF01979">
    <property type="entry name" value="Amidohydro_1"/>
    <property type="match status" value="1"/>
</dbReference>
<dbReference type="SUPFAM" id="SSF51338">
    <property type="entry name" value="Composite domain of metallo-dependent hydrolases"/>
    <property type="match status" value="1"/>
</dbReference>
<dbReference type="SUPFAM" id="SSF51556">
    <property type="entry name" value="Metallo-dependent hydrolases"/>
    <property type="match status" value="1"/>
</dbReference>
<keyword id="KW-0963">Cytoplasm</keyword>
<keyword id="KW-0369">Histidine metabolism</keyword>
<keyword id="KW-0378">Hydrolase</keyword>
<keyword id="KW-0408">Iron</keyword>
<keyword id="KW-0479">Metal-binding</keyword>
<keyword id="KW-1185">Reference proteome</keyword>
<keyword id="KW-0862">Zinc</keyword>
<comment type="function">
    <text evidence="1">Catalyzes the hydrolytic cleavage of the carbon-nitrogen bond in imidazolone-5-propanoate to yield N-formimidoyl-L-glutamate. It is the third step in the universal histidine degradation pathway.</text>
</comment>
<comment type="catalytic activity">
    <reaction evidence="1">
        <text>4-imidazolone-5-propanoate + H2O = N-formimidoyl-L-glutamate</text>
        <dbReference type="Rhea" id="RHEA:23660"/>
        <dbReference type="ChEBI" id="CHEBI:15377"/>
        <dbReference type="ChEBI" id="CHEBI:58928"/>
        <dbReference type="ChEBI" id="CHEBI:77893"/>
        <dbReference type="EC" id="3.5.2.7"/>
    </reaction>
</comment>
<comment type="cofactor">
    <cofactor evidence="1">
        <name>Zn(2+)</name>
        <dbReference type="ChEBI" id="CHEBI:29105"/>
    </cofactor>
    <cofactor evidence="1">
        <name>Fe(3+)</name>
        <dbReference type="ChEBI" id="CHEBI:29034"/>
    </cofactor>
    <text evidence="1">Binds 1 zinc or iron ion per subunit.</text>
</comment>
<comment type="pathway">
    <text evidence="1">Amino-acid degradation; L-histidine degradation into L-glutamate; N-formimidoyl-L-glutamate from L-histidine: step 3/3.</text>
</comment>
<comment type="subcellular location">
    <subcellularLocation>
        <location evidence="1">Cytoplasm</location>
    </subcellularLocation>
</comment>
<comment type="similarity">
    <text evidence="1">Belongs to the metallo-dependent hydrolases superfamily. HutI family.</text>
</comment>
<evidence type="ECO:0000255" key="1">
    <source>
        <dbReference type="HAMAP-Rule" id="MF_00372"/>
    </source>
</evidence>
<gene>
    <name evidence="1" type="primary">hutI</name>
    <name type="ordered locus">BC_3650</name>
</gene>